<proteinExistence type="inferred from homology"/>
<protein>
    <recommendedName>
        <fullName>Alpha-amylase-related protein</fullName>
        <ecNumber evidence="2">3.2.1.1</ecNumber>
    </recommendedName>
</protein>
<evidence type="ECO:0000250" key="1"/>
<evidence type="ECO:0000250" key="2">
    <source>
        <dbReference type="UniProtKB" id="P04746"/>
    </source>
</evidence>
<evidence type="ECO:0000250" key="3">
    <source>
        <dbReference type="UniProtKB" id="P56634"/>
    </source>
</evidence>
<evidence type="ECO:0000255" key="4"/>
<evidence type="ECO:0000305" key="5"/>
<dbReference type="EC" id="3.2.1.1" evidence="2"/>
<dbReference type="EMBL" id="U96158">
    <property type="protein sequence ID" value="AAC39108.2"/>
    <property type="molecule type" value="Genomic_DNA"/>
</dbReference>
<dbReference type="SMR" id="O77015"/>
<dbReference type="CAZy" id="GH13">
    <property type="family name" value="Glycoside Hydrolase Family 13"/>
</dbReference>
<dbReference type="GO" id="GO:0005576">
    <property type="term" value="C:extracellular region"/>
    <property type="evidence" value="ECO:0007669"/>
    <property type="project" value="UniProtKB-SubCell"/>
</dbReference>
<dbReference type="GO" id="GO:0004556">
    <property type="term" value="F:alpha-amylase activity"/>
    <property type="evidence" value="ECO:0007669"/>
    <property type="project" value="UniProtKB-EC"/>
</dbReference>
<dbReference type="GO" id="GO:0046872">
    <property type="term" value="F:metal ion binding"/>
    <property type="evidence" value="ECO:0007669"/>
    <property type="project" value="UniProtKB-KW"/>
</dbReference>
<dbReference type="GO" id="GO:0005975">
    <property type="term" value="P:carbohydrate metabolic process"/>
    <property type="evidence" value="ECO:0007669"/>
    <property type="project" value="InterPro"/>
</dbReference>
<dbReference type="CDD" id="cd11317">
    <property type="entry name" value="AmyAc_bac_euk_AmyA"/>
    <property type="match status" value="1"/>
</dbReference>
<dbReference type="FunFam" id="3.20.20.80:FF:000119">
    <property type="entry name" value="Alpha-amylase-related protein"/>
    <property type="match status" value="1"/>
</dbReference>
<dbReference type="FunFam" id="2.60.40.1180:FF:000020">
    <property type="entry name" value="Pancreatic alpha-amylase"/>
    <property type="match status" value="1"/>
</dbReference>
<dbReference type="Gene3D" id="3.20.20.80">
    <property type="entry name" value="Glycosidases"/>
    <property type="match status" value="1"/>
</dbReference>
<dbReference type="Gene3D" id="2.60.40.1180">
    <property type="entry name" value="Golgi alpha-mannosidase II"/>
    <property type="match status" value="1"/>
</dbReference>
<dbReference type="InterPro" id="IPR006048">
    <property type="entry name" value="A-amylase/branching_C"/>
</dbReference>
<dbReference type="InterPro" id="IPR031319">
    <property type="entry name" value="A-amylase_C"/>
</dbReference>
<dbReference type="InterPro" id="IPR006046">
    <property type="entry name" value="Alpha_amylase"/>
</dbReference>
<dbReference type="InterPro" id="IPR006047">
    <property type="entry name" value="Glyco_hydro_13_cat_dom"/>
</dbReference>
<dbReference type="InterPro" id="IPR013780">
    <property type="entry name" value="Glyco_hydro_b"/>
</dbReference>
<dbReference type="InterPro" id="IPR017853">
    <property type="entry name" value="Glycoside_hydrolase_SF"/>
</dbReference>
<dbReference type="PANTHER" id="PTHR43447">
    <property type="entry name" value="ALPHA-AMYLASE"/>
    <property type="match status" value="1"/>
</dbReference>
<dbReference type="Pfam" id="PF00128">
    <property type="entry name" value="Alpha-amylase"/>
    <property type="match status" value="1"/>
</dbReference>
<dbReference type="Pfam" id="PF02806">
    <property type="entry name" value="Alpha-amylase_C"/>
    <property type="match status" value="1"/>
</dbReference>
<dbReference type="PRINTS" id="PR00110">
    <property type="entry name" value="ALPHAAMYLASE"/>
</dbReference>
<dbReference type="SMART" id="SM00642">
    <property type="entry name" value="Aamy"/>
    <property type="match status" value="1"/>
</dbReference>
<dbReference type="SMART" id="SM00632">
    <property type="entry name" value="Aamy_C"/>
    <property type="match status" value="1"/>
</dbReference>
<dbReference type="SUPFAM" id="SSF51445">
    <property type="entry name" value="(Trans)glycosidases"/>
    <property type="match status" value="1"/>
</dbReference>
<dbReference type="SUPFAM" id="SSF51011">
    <property type="entry name" value="Glycosyl hydrolase domain"/>
    <property type="match status" value="1"/>
</dbReference>
<gene>
    <name type="primary">Amyrel</name>
</gene>
<sequence>MFKLAFTLTLCLAGSLSLAQHNPHWWGNRNTIVHLFEWKWLDIAQECENFLGPQGFAGVQVSPVNENIISAGRPWWERYQPISYKLTTRSGNEEEFGDMVRRCNDVGVRIYVDVLLNHMSGDFDGVAVGTAGTEAEPRKKSFPGVPYTAQDFHPTCEITDWNDRFQVQQCELVGLKDLNQSSDWVRSKLIEFLDHLIELGVAGFRVDAAKHMASEDLEFIYSSLSNLNIAHGFPHNSRPFIFQEVIDHGHETVSRDEYKDLGAVTEFRFSEEIGNAFRGNNALKWLQSWGTGWGFLPSGQALTFVDNHDNQRDAGAVLSYKSPKPYKMATAFHLAYPYGISRVMSSFAFDDHDTPPPQDAQERIISPEFDEDGACVNGWICEHRWRQIYAMVGFKNAVRDTEITGWWDNGDSQISFCRGNKGFLALNNNLYDLSQDLNTCLPAGTYCDVISGSLIDGSCTGKSVTVNEQGYGYIHIGSDDFDGVLALHVDAKV</sequence>
<organism>
    <name type="scientific">Drosophila orena</name>
    <name type="common">Fruit fly</name>
    <dbReference type="NCBI Taxonomy" id="7233"/>
    <lineage>
        <taxon>Eukaryota</taxon>
        <taxon>Metazoa</taxon>
        <taxon>Ecdysozoa</taxon>
        <taxon>Arthropoda</taxon>
        <taxon>Hexapoda</taxon>
        <taxon>Insecta</taxon>
        <taxon>Pterygota</taxon>
        <taxon>Neoptera</taxon>
        <taxon>Endopterygota</taxon>
        <taxon>Diptera</taxon>
        <taxon>Brachycera</taxon>
        <taxon>Muscomorpha</taxon>
        <taxon>Ephydroidea</taxon>
        <taxon>Drosophilidae</taxon>
        <taxon>Drosophila</taxon>
        <taxon>Sophophora</taxon>
    </lineage>
</organism>
<comment type="catalytic activity">
    <reaction evidence="2">
        <text>Endohydrolysis of (1-&gt;4)-alpha-D-glucosidic linkages in polysaccharides containing three or more (1-&gt;4)-alpha-linked D-glucose units.</text>
        <dbReference type="EC" id="3.2.1.1"/>
    </reaction>
</comment>
<comment type="cofactor">
    <cofactor evidence="3">
        <name>Ca(2+)</name>
        <dbReference type="ChEBI" id="CHEBI:29108"/>
    </cofactor>
    <text evidence="3">Binds 1 Ca(2+) ion per subunit.</text>
</comment>
<comment type="cofactor">
    <cofactor evidence="3">
        <name>chloride</name>
        <dbReference type="ChEBI" id="CHEBI:17996"/>
    </cofactor>
    <text evidence="3">Binds 1 Cl(-) ion per subunit.</text>
</comment>
<comment type="subunit">
    <text evidence="1">Monomer.</text>
</comment>
<comment type="subcellular location">
    <subcellularLocation>
        <location evidence="5">Secreted</location>
    </subcellularLocation>
</comment>
<comment type="similarity">
    <text evidence="5">Belongs to the glycosyl hydrolase 13 family.</text>
</comment>
<accession>O77015</accession>
<reference key="1">
    <citation type="submission" date="2000-01" db="EMBL/GenBank/DDBJ databases">
        <authorList>
            <person name="Da Lage J.-L."/>
        </authorList>
    </citation>
    <scope>NUCLEOTIDE SEQUENCE [GENOMIC DNA]</scope>
</reference>
<keyword id="KW-0106">Calcium</keyword>
<keyword id="KW-0119">Carbohydrate metabolism</keyword>
<keyword id="KW-0868">Chloride</keyword>
<keyword id="KW-1015">Disulfide bond</keyword>
<keyword id="KW-0326">Glycosidase</keyword>
<keyword id="KW-0378">Hydrolase</keyword>
<keyword id="KW-0479">Metal-binding</keyword>
<keyword id="KW-0873">Pyrrolidone carboxylic acid</keyword>
<keyword id="KW-0964">Secreted</keyword>
<keyword id="KW-0732">Signal</keyword>
<name>AMYR_DROOR</name>
<feature type="signal peptide" evidence="1">
    <location>
        <begin position="1"/>
        <end position="19"/>
    </location>
</feature>
<feature type="chain" id="PRO_0000001383" description="Alpha-amylase-related protein">
    <location>
        <begin position="20"/>
        <end position="493"/>
    </location>
</feature>
<feature type="active site" description="Nucleophile" evidence="2">
    <location>
        <position position="207"/>
    </location>
</feature>
<feature type="active site" description="Proton donor" evidence="2">
    <location>
        <position position="244"/>
    </location>
</feature>
<feature type="binding site" evidence="3">
    <location>
        <position position="117"/>
    </location>
    <ligand>
        <name>Ca(2+)</name>
        <dbReference type="ChEBI" id="CHEBI:29108"/>
    </ligand>
</feature>
<feature type="binding site" evidence="3">
    <location>
        <position position="168"/>
    </location>
    <ligand>
        <name>Ca(2+)</name>
        <dbReference type="ChEBI" id="CHEBI:29108"/>
    </ligand>
</feature>
<feature type="binding site" evidence="3">
    <location>
        <position position="177"/>
    </location>
    <ligand>
        <name>Ca(2+)</name>
        <dbReference type="ChEBI" id="CHEBI:29108"/>
    </ligand>
</feature>
<feature type="binding site" evidence="3">
    <location>
        <position position="205"/>
    </location>
    <ligand>
        <name>chloride</name>
        <dbReference type="ChEBI" id="CHEBI:17996"/>
    </ligand>
</feature>
<feature type="binding site" evidence="3">
    <location>
        <position position="211"/>
    </location>
    <ligand>
        <name>Ca(2+)</name>
        <dbReference type="ChEBI" id="CHEBI:29108"/>
    </ligand>
</feature>
<feature type="binding site" evidence="3">
    <location>
        <position position="307"/>
    </location>
    <ligand>
        <name>chloride</name>
        <dbReference type="ChEBI" id="CHEBI:17996"/>
    </ligand>
</feature>
<feature type="binding site" evidence="3">
    <location>
        <position position="342"/>
    </location>
    <ligand>
        <name>chloride</name>
        <dbReference type="ChEBI" id="CHEBI:17996"/>
    </ligand>
</feature>
<feature type="site" description="Transition state stabilizer" evidence="2">
    <location>
        <position position="309"/>
    </location>
</feature>
<feature type="modified residue" description="Pyrrolidone carboxylic acid" evidence="1">
    <location>
        <position position="20"/>
    </location>
</feature>
<feature type="disulfide bond" evidence="3">
    <location>
        <begin position="47"/>
        <end position="103"/>
    </location>
</feature>
<feature type="disulfide bond" evidence="3">
    <location>
        <begin position="156"/>
        <end position="170"/>
    </location>
</feature>
<feature type="disulfide bond" evidence="3">
    <location>
        <begin position="375"/>
        <end position="381"/>
    </location>
</feature>
<feature type="disulfide bond" evidence="4">
    <location>
        <begin position="417"/>
        <end position="440"/>
    </location>
</feature>
<feature type="disulfide bond" evidence="3">
    <location>
        <begin position="447"/>
        <end position="459"/>
    </location>
</feature>